<evidence type="ECO:0000255" key="1">
    <source>
        <dbReference type="HAMAP-Rule" id="MF_00012"/>
    </source>
</evidence>
<reference key="1">
    <citation type="journal article" date="2007" name="ISME J.">
        <title>Population level functional diversity in a microbial community revealed by comparative genomic and metagenomic analyses.</title>
        <authorList>
            <person name="Bhaya D."/>
            <person name="Grossman A.R."/>
            <person name="Steunou A.-S."/>
            <person name="Khuri N."/>
            <person name="Cohan F.M."/>
            <person name="Hamamura N."/>
            <person name="Melendrez M.C."/>
            <person name="Bateson M.M."/>
            <person name="Ward D.M."/>
            <person name="Heidelberg J.F."/>
        </authorList>
    </citation>
    <scope>NUCLEOTIDE SEQUENCE [LARGE SCALE GENOMIC DNA]</scope>
    <source>
        <strain>JA-2-3B'a(2-13)</strain>
    </source>
</reference>
<feature type="chain" id="PRO_0000321608" description="Dihydroxy-acid dehydratase">
    <location>
        <begin position="1"/>
        <end position="565"/>
    </location>
</feature>
<feature type="active site" description="Proton acceptor" evidence="1">
    <location>
        <position position="476"/>
    </location>
</feature>
<feature type="binding site" evidence="1">
    <location>
        <position position="53"/>
    </location>
    <ligand>
        <name>[2Fe-2S] cluster</name>
        <dbReference type="ChEBI" id="CHEBI:190135"/>
    </ligand>
</feature>
<feature type="binding site" evidence="1">
    <location>
        <position position="85"/>
    </location>
    <ligand>
        <name>Mg(2+)</name>
        <dbReference type="ChEBI" id="CHEBI:18420"/>
    </ligand>
</feature>
<feature type="binding site" evidence="1">
    <location>
        <position position="126"/>
    </location>
    <ligand>
        <name>[2Fe-2S] cluster</name>
        <dbReference type="ChEBI" id="CHEBI:190135"/>
    </ligand>
</feature>
<feature type="binding site" evidence="1">
    <location>
        <position position="127"/>
    </location>
    <ligand>
        <name>Mg(2+)</name>
        <dbReference type="ChEBI" id="CHEBI:18420"/>
    </ligand>
</feature>
<feature type="binding site" description="via carbamate group" evidence="1">
    <location>
        <position position="128"/>
    </location>
    <ligand>
        <name>Mg(2+)</name>
        <dbReference type="ChEBI" id="CHEBI:18420"/>
    </ligand>
</feature>
<feature type="binding site" evidence="1">
    <location>
        <position position="198"/>
    </location>
    <ligand>
        <name>[2Fe-2S] cluster</name>
        <dbReference type="ChEBI" id="CHEBI:190135"/>
    </ligand>
</feature>
<feature type="binding site" evidence="1">
    <location>
        <position position="450"/>
    </location>
    <ligand>
        <name>Mg(2+)</name>
        <dbReference type="ChEBI" id="CHEBI:18420"/>
    </ligand>
</feature>
<feature type="modified residue" description="N6-carboxylysine" evidence="1">
    <location>
        <position position="128"/>
    </location>
</feature>
<name>ILVD_SYNJB</name>
<organism>
    <name type="scientific">Synechococcus sp. (strain JA-2-3B'a(2-13))</name>
    <name type="common">Cyanobacteria bacterium Yellowstone B-Prime</name>
    <dbReference type="NCBI Taxonomy" id="321332"/>
    <lineage>
        <taxon>Bacteria</taxon>
        <taxon>Bacillati</taxon>
        <taxon>Cyanobacteriota</taxon>
        <taxon>Cyanophyceae</taxon>
        <taxon>Synechococcales</taxon>
        <taxon>Synechococcaceae</taxon>
        <taxon>Synechococcus</taxon>
    </lineage>
</organism>
<sequence>MANSPFPLRSQVVTQGVQRSPNRAMLRAVGFRDEDFGKPIVGIANAHSTLTPCNMGIQTLAERAEAALRTAGCMPQVFGTITISDGISMGTEGMKYSLVSREVIADSIETVVNGQSMDGLLAIGGCDKNMPGAMIAMARLNVPSIFVYGGTIKPGHYNGRDLTIVSAFEAVGEFSAGRISEEELLAVERHACPGAGSCGGMYTANTMSSAFEAMGMSLPYSSTMAAEDEEKAESAAQSAKVLAEAIKANIRPRDIITRKSIENAISVIMAVGGSTNAVLHFLAIAHAAEVPLTLDDFETIRARVPVLCDLKPSGRFVATDLHRAGGIPQVMKMLLNHGLLHGDCLTISGQTIVEVLRDVPDEPSPDQEVIRPWHSPLYPQGHLAILKGNLAPEGAVAKITGVKNPQITGPARVFDSEESCLQAILSGQIRAGDVVVIRYEGPKGGPGMREMLSPTSAIIGAGLGDSVGLITDGRFSGGTYGMVVGHVAPEAYVGGTIALVEEGDLITIDAPARQLHLHVSEEELARRRARWSPPEPRYKRGTLAKYAKLVSSSSLGAVTDLNLWD</sequence>
<proteinExistence type="inferred from homology"/>
<accession>Q2JK60</accession>
<comment type="function">
    <text evidence="1">Functions in the biosynthesis of branched-chain amino acids. Catalyzes the dehydration of (2R,3R)-2,3-dihydroxy-3-methylpentanoate (2,3-dihydroxy-3-methylvalerate) into 2-oxo-3-methylpentanoate (2-oxo-3-methylvalerate) and of (2R)-2,3-dihydroxy-3-methylbutanoate (2,3-dihydroxyisovalerate) into 2-oxo-3-methylbutanoate (2-oxoisovalerate), the penultimate precursor to L-isoleucine and L-valine, respectively.</text>
</comment>
<comment type="catalytic activity">
    <reaction evidence="1">
        <text>(2R)-2,3-dihydroxy-3-methylbutanoate = 3-methyl-2-oxobutanoate + H2O</text>
        <dbReference type="Rhea" id="RHEA:24809"/>
        <dbReference type="ChEBI" id="CHEBI:11851"/>
        <dbReference type="ChEBI" id="CHEBI:15377"/>
        <dbReference type="ChEBI" id="CHEBI:49072"/>
        <dbReference type="EC" id="4.2.1.9"/>
    </reaction>
    <physiologicalReaction direction="left-to-right" evidence="1">
        <dbReference type="Rhea" id="RHEA:24810"/>
    </physiologicalReaction>
</comment>
<comment type="catalytic activity">
    <reaction evidence="1">
        <text>(2R,3R)-2,3-dihydroxy-3-methylpentanoate = (S)-3-methyl-2-oxopentanoate + H2O</text>
        <dbReference type="Rhea" id="RHEA:27694"/>
        <dbReference type="ChEBI" id="CHEBI:15377"/>
        <dbReference type="ChEBI" id="CHEBI:35146"/>
        <dbReference type="ChEBI" id="CHEBI:49258"/>
        <dbReference type="EC" id="4.2.1.9"/>
    </reaction>
    <physiologicalReaction direction="left-to-right" evidence="1">
        <dbReference type="Rhea" id="RHEA:27695"/>
    </physiologicalReaction>
</comment>
<comment type="cofactor">
    <cofactor evidence="1">
        <name>[2Fe-2S] cluster</name>
        <dbReference type="ChEBI" id="CHEBI:190135"/>
    </cofactor>
    <text evidence="1">Binds 1 [2Fe-2S] cluster per subunit. This cluster acts as a Lewis acid cofactor.</text>
</comment>
<comment type="cofactor">
    <cofactor evidence="1">
        <name>Mg(2+)</name>
        <dbReference type="ChEBI" id="CHEBI:18420"/>
    </cofactor>
</comment>
<comment type="pathway">
    <text evidence="1">Amino-acid biosynthesis; L-isoleucine biosynthesis; L-isoleucine from 2-oxobutanoate: step 3/4.</text>
</comment>
<comment type="pathway">
    <text evidence="1">Amino-acid biosynthesis; L-valine biosynthesis; L-valine from pyruvate: step 3/4.</text>
</comment>
<comment type="subunit">
    <text evidence="1">Homodimer.</text>
</comment>
<comment type="similarity">
    <text evidence="1">Belongs to the IlvD/Edd family.</text>
</comment>
<dbReference type="EC" id="4.2.1.9" evidence="1"/>
<dbReference type="EMBL" id="CP000240">
    <property type="protein sequence ID" value="ABD02935.1"/>
    <property type="molecule type" value="Genomic_DNA"/>
</dbReference>
<dbReference type="RefSeq" id="WP_011433574.1">
    <property type="nucleotide sequence ID" value="NC_007776.1"/>
</dbReference>
<dbReference type="SMR" id="Q2JK60"/>
<dbReference type="STRING" id="321332.CYB_1987"/>
<dbReference type="KEGG" id="cyb:CYB_1987"/>
<dbReference type="eggNOG" id="COG0129">
    <property type="taxonomic scope" value="Bacteria"/>
</dbReference>
<dbReference type="HOGENOM" id="CLU_014271_4_2_3"/>
<dbReference type="OrthoDB" id="9807077at2"/>
<dbReference type="UniPathway" id="UPA00047">
    <property type="reaction ID" value="UER00057"/>
</dbReference>
<dbReference type="UniPathway" id="UPA00049">
    <property type="reaction ID" value="UER00061"/>
</dbReference>
<dbReference type="Proteomes" id="UP000001938">
    <property type="component" value="Chromosome"/>
</dbReference>
<dbReference type="GO" id="GO:0051537">
    <property type="term" value="F:2 iron, 2 sulfur cluster binding"/>
    <property type="evidence" value="ECO:0007669"/>
    <property type="project" value="UniProtKB-UniRule"/>
</dbReference>
<dbReference type="GO" id="GO:0004160">
    <property type="term" value="F:dihydroxy-acid dehydratase activity"/>
    <property type="evidence" value="ECO:0007669"/>
    <property type="project" value="UniProtKB-UniRule"/>
</dbReference>
<dbReference type="GO" id="GO:0000287">
    <property type="term" value="F:magnesium ion binding"/>
    <property type="evidence" value="ECO:0007669"/>
    <property type="project" value="UniProtKB-UniRule"/>
</dbReference>
<dbReference type="GO" id="GO:0009097">
    <property type="term" value="P:isoleucine biosynthetic process"/>
    <property type="evidence" value="ECO:0007669"/>
    <property type="project" value="UniProtKB-UniRule"/>
</dbReference>
<dbReference type="GO" id="GO:0009099">
    <property type="term" value="P:L-valine biosynthetic process"/>
    <property type="evidence" value="ECO:0007669"/>
    <property type="project" value="UniProtKB-UniRule"/>
</dbReference>
<dbReference type="FunFam" id="3.50.30.80:FF:000001">
    <property type="entry name" value="Dihydroxy-acid dehydratase"/>
    <property type="match status" value="1"/>
</dbReference>
<dbReference type="Gene3D" id="3.50.30.80">
    <property type="entry name" value="IlvD/EDD C-terminal domain-like"/>
    <property type="match status" value="1"/>
</dbReference>
<dbReference type="HAMAP" id="MF_00012">
    <property type="entry name" value="IlvD"/>
    <property type="match status" value="1"/>
</dbReference>
<dbReference type="InterPro" id="IPR050165">
    <property type="entry name" value="DHAD_IlvD/Edd"/>
</dbReference>
<dbReference type="InterPro" id="IPR042096">
    <property type="entry name" value="Dihydro-acid_dehy_C"/>
</dbReference>
<dbReference type="InterPro" id="IPR004404">
    <property type="entry name" value="DihydroxyA_deHydtase"/>
</dbReference>
<dbReference type="InterPro" id="IPR020558">
    <property type="entry name" value="DiOHA_6PGluconate_deHydtase_CS"/>
</dbReference>
<dbReference type="InterPro" id="IPR056740">
    <property type="entry name" value="ILV_EDD_C"/>
</dbReference>
<dbReference type="InterPro" id="IPR000581">
    <property type="entry name" value="ILV_EDD_N"/>
</dbReference>
<dbReference type="InterPro" id="IPR037237">
    <property type="entry name" value="IlvD/EDD_N"/>
</dbReference>
<dbReference type="NCBIfam" id="TIGR00110">
    <property type="entry name" value="ilvD"/>
    <property type="match status" value="1"/>
</dbReference>
<dbReference type="NCBIfam" id="NF002068">
    <property type="entry name" value="PRK00911.1"/>
    <property type="match status" value="1"/>
</dbReference>
<dbReference type="PANTHER" id="PTHR21000">
    <property type="entry name" value="DIHYDROXY-ACID DEHYDRATASE DAD"/>
    <property type="match status" value="1"/>
</dbReference>
<dbReference type="PANTHER" id="PTHR21000:SF5">
    <property type="entry name" value="DIHYDROXY-ACID DEHYDRATASE, MITOCHONDRIAL"/>
    <property type="match status" value="1"/>
</dbReference>
<dbReference type="Pfam" id="PF24877">
    <property type="entry name" value="ILV_EDD_C"/>
    <property type="match status" value="1"/>
</dbReference>
<dbReference type="Pfam" id="PF00920">
    <property type="entry name" value="ILVD_EDD_N"/>
    <property type="match status" value="1"/>
</dbReference>
<dbReference type="SUPFAM" id="SSF143975">
    <property type="entry name" value="IlvD/EDD N-terminal domain-like"/>
    <property type="match status" value="1"/>
</dbReference>
<dbReference type="SUPFAM" id="SSF52016">
    <property type="entry name" value="LeuD/IlvD-like"/>
    <property type="match status" value="1"/>
</dbReference>
<dbReference type="PROSITE" id="PS00886">
    <property type="entry name" value="ILVD_EDD_1"/>
    <property type="match status" value="1"/>
</dbReference>
<dbReference type="PROSITE" id="PS00887">
    <property type="entry name" value="ILVD_EDD_2"/>
    <property type="match status" value="1"/>
</dbReference>
<keyword id="KW-0001">2Fe-2S</keyword>
<keyword id="KW-0028">Amino-acid biosynthesis</keyword>
<keyword id="KW-0100">Branched-chain amino acid biosynthesis</keyword>
<keyword id="KW-0408">Iron</keyword>
<keyword id="KW-0411">Iron-sulfur</keyword>
<keyword id="KW-0456">Lyase</keyword>
<keyword id="KW-0460">Magnesium</keyword>
<keyword id="KW-0479">Metal-binding</keyword>
<keyword id="KW-1185">Reference proteome</keyword>
<gene>
    <name evidence="1" type="primary">ilvD</name>
    <name type="ordered locus">CYB_1987</name>
</gene>
<protein>
    <recommendedName>
        <fullName evidence="1">Dihydroxy-acid dehydratase</fullName>
        <shortName evidence="1">DAD</shortName>
        <ecNumber evidence="1">4.2.1.9</ecNumber>
    </recommendedName>
</protein>